<reference key="1">
    <citation type="journal article" date="2001" name="Nature">
        <title>Genome sequence of enterohaemorrhagic Escherichia coli O157:H7.</title>
        <authorList>
            <person name="Perna N.T."/>
            <person name="Plunkett G. III"/>
            <person name="Burland V."/>
            <person name="Mau B."/>
            <person name="Glasner J.D."/>
            <person name="Rose D.J."/>
            <person name="Mayhew G.F."/>
            <person name="Evans P.S."/>
            <person name="Gregor J."/>
            <person name="Kirkpatrick H.A."/>
            <person name="Posfai G."/>
            <person name="Hackett J."/>
            <person name="Klink S."/>
            <person name="Boutin A."/>
            <person name="Shao Y."/>
            <person name="Miller L."/>
            <person name="Grotbeck E.J."/>
            <person name="Davis N.W."/>
            <person name="Lim A."/>
            <person name="Dimalanta E.T."/>
            <person name="Potamousis K."/>
            <person name="Apodaca J."/>
            <person name="Anantharaman T.S."/>
            <person name="Lin J."/>
            <person name="Yen G."/>
            <person name="Schwartz D.C."/>
            <person name="Welch R.A."/>
            <person name="Blattner F.R."/>
        </authorList>
    </citation>
    <scope>NUCLEOTIDE SEQUENCE [LARGE SCALE GENOMIC DNA]</scope>
    <source>
        <strain>O157:H7 / EDL933 / ATCC 700927 / EHEC</strain>
    </source>
</reference>
<reference key="2">
    <citation type="journal article" date="2001" name="DNA Res.">
        <title>Complete genome sequence of enterohemorrhagic Escherichia coli O157:H7 and genomic comparison with a laboratory strain K-12.</title>
        <authorList>
            <person name="Hayashi T."/>
            <person name="Makino K."/>
            <person name="Ohnishi M."/>
            <person name="Kurokawa K."/>
            <person name="Ishii K."/>
            <person name="Yokoyama K."/>
            <person name="Han C.-G."/>
            <person name="Ohtsubo E."/>
            <person name="Nakayama K."/>
            <person name="Murata T."/>
            <person name="Tanaka M."/>
            <person name="Tobe T."/>
            <person name="Iida T."/>
            <person name="Takami H."/>
            <person name="Honda T."/>
            <person name="Sasakawa C."/>
            <person name="Ogasawara N."/>
            <person name="Yasunaga T."/>
            <person name="Kuhara S."/>
            <person name="Shiba T."/>
            <person name="Hattori M."/>
            <person name="Shinagawa H."/>
        </authorList>
    </citation>
    <scope>NUCLEOTIDE SEQUENCE [LARGE SCALE GENOMIC DNA]</scope>
    <source>
        <strain>O157:H7 / Sakai / RIMD 0509952 / EHEC</strain>
    </source>
</reference>
<comment type="function">
    <text evidence="1">Part of the ABC transporter complex LptBFG involved in the translocation of lipopolysaccharide (LPS) from the inner membrane to the outer membrane. Probably responsible for energy coupling to the transport system (By similarity).</text>
</comment>
<comment type="subunit">
    <text evidence="1">Component of the lipopolysaccharide transport and assembly complex. The LptBFG transporter is composed of two ATP-binding proteins (LptB) and two transmembrane proteins (LptF and LptG) (By similarity).</text>
</comment>
<comment type="subcellular location">
    <subcellularLocation>
        <location>Cytoplasm</location>
    </subcellularLocation>
    <subcellularLocation>
        <location evidence="1">Cell inner membrane</location>
        <topology evidence="1">Peripheral membrane protein</topology>
        <orientation evidence="1">Cytoplasmic side</orientation>
    </subcellularLocation>
</comment>
<comment type="similarity">
    <text evidence="3">Belongs to the ABC transporter superfamily. Outer membrane lipopolysaccharide export (TC 1.B.42) family.</text>
</comment>
<feature type="initiator methionine" description="Removed" evidence="1">
    <location>
        <position position="1"/>
    </location>
</feature>
<feature type="chain" id="PRO_0000093179" description="Lipopolysaccharide export system ATP-binding protein LptB">
    <location>
        <begin position="2"/>
        <end position="241"/>
    </location>
</feature>
<feature type="domain" description="ABC transporter" evidence="2">
    <location>
        <begin position="4"/>
        <end position="237"/>
    </location>
</feature>
<feature type="binding site" evidence="2">
    <location>
        <begin position="36"/>
        <end position="43"/>
    </location>
    <ligand>
        <name>ATP</name>
        <dbReference type="ChEBI" id="CHEBI:30616"/>
    </ligand>
</feature>
<proteinExistence type="inferred from homology"/>
<sequence length="241" mass="26801">MATLTAKNLAKAYKGRRVVEDVSLTVNSGEIVGLLGPNGAGKTTTFYMVVGIVPRDAGNIIIDDDDISLLPLHARARRGIGYLPQEASIFRRLSVYDNLMAVLQIRDDLSAEQREDRANELMEEFHIEHLRDSMGQSLSGGERRRVEIARALAANPKFILLDEPFAGVDPISVIDIKRIIEHLRDSGLGVLITDHNVRETLAVCERAYIVSQGHLIAHGTPTEILQDEHVKRVYLGEDFRL</sequence>
<dbReference type="EC" id="7.5.2.-"/>
<dbReference type="EMBL" id="AE005174">
    <property type="protein sequence ID" value="AAG58335.1"/>
    <property type="molecule type" value="Genomic_DNA"/>
</dbReference>
<dbReference type="EMBL" id="BA000007">
    <property type="protein sequence ID" value="BAB37503.1"/>
    <property type="molecule type" value="Genomic_DNA"/>
</dbReference>
<dbReference type="PIR" id="C85984">
    <property type="entry name" value="C85984"/>
</dbReference>
<dbReference type="PIR" id="H91138">
    <property type="entry name" value="H91138"/>
</dbReference>
<dbReference type="RefSeq" id="NP_312107.1">
    <property type="nucleotide sequence ID" value="NC_002695.1"/>
</dbReference>
<dbReference type="RefSeq" id="WP_000224099.1">
    <property type="nucleotide sequence ID" value="NZ_VOAI01000014.1"/>
</dbReference>
<dbReference type="SMR" id="P0A9V3"/>
<dbReference type="STRING" id="155864.Z4564"/>
<dbReference type="GeneID" id="916074"/>
<dbReference type="GeneID" id="93778780"/>
<dbReference type="KEGG" id="ece:Z4564"/>
<dbReference type="KEGG" id="ecs:ECs_4080"/>
<dbReference type="PATRIC" id="fig|386585.9.peg.4259"/>
<dbReference type="eggNOG" id="COG1137">
    <property type="taxonomic scope" value="Bacteria"/>
</dbReference>
<dbReference type="HOGENOM" id="CLU_000604_1_2_6"/>
<dbReference type="OMA" id="VTSWCAQ"/>
<dbReference type="Proteomes" id="UP000000558">
    <property type="component" value="Chromosome"/>
</dbReference>
<dbReference type="Proteomes" id="UP000002519">
    <property type="component" value="Chromosome"/>
</dbReference>
<dbReference type="GO" id="GO:0043190">
    <property type="term" value="C:ATP-binding cassette (ABC) transporter complex"/>
    <property type="evidence" value="ECO:0007669"/>
    <property type="project" value="InterPro"/>
</dbReference>
<dbReference type="GO" id="GO:0005737">
    <property type="term" value="C:cytoplasm"/>
    <property type="evidence" value="ECO:0007669"/>
    <property type="project" value="UniProtKB-SubCell"/>
</dbReference>
<dbReference type="GO" id="GO:0005524">
    <property type="term" value="F:ATP binding"/>
    <property type="evidence" value="ECO:0007669"/>
    <property type="project" value="UniProtKB-KW"/>
</dbReference>
<dbReference type="GO" id="GO:0016887">
    <property type="term" value="F:ATP hydrolysis activity"/>
    <property type="evidence" value="ECO:0007669"/>
    <property type="project" value="InterPro"/>
</dbReference>
<dbReference type="GO" id="GO:0055085">
    <property type="term" value="P:transmembrane transport"/>
    <property type="evidence" value="ECO:0007669"/>
    <property type="project" value="InterPro"/>
</dbReference>
<dbReference type="CDD" id="cd03218">
    <property type="entry name" value="ABC_YhbG"/>
    <property type="match status" value="1"/>
</dbReference>
<dbReference type="FunFam" id="3.40.50.300:FF:000151">
    <property type="entry name" value="Lipopolysaccharide ABC transporter ATP-binding protein"/>
    <property type="match status" value="1"/>
</dbReference>
<dbReference type="Gene3D" id="3.40.50.300">
    <property type="entry name" value="P-loop containing nucleotide triphosphate hydrolases"/>
    <property type="match status" value="1"/>
</dbReference>
<dbReference type="InterPro" id="IPR003593">
    <property type="entry name" value="AAA+_ATPase"/>
</dbReference>
<dbReference type="InterPro" id="IPR051120">
    <property type="entry name" value="ABC_AA/LPS_Transport"/>
</dbReference>
<dbReference type="InterPro" id="IPR003439">
    <property type="entry name" value="ABC_transporter-like_ATP-bd"/>
</dbReference>
<dbReference type="InterPro" id="IPR017871">
    <property type="entry name" value="ABC_transporter-like_CS"/>
</dbReference>
<dbReference type="InterPro" id="IPR032823">
    <property type="entry name" value="BCA_ABC_TP_C"/>
</dbReference>
<dbReference type="InterPro" id="IPR030921">
    <property type="entry name" value="LPS_export_LptB"/>
</dbReference>
<dbReference type="InterPro" id="IPR027417">
    <property type="entry name" value="P-loop_NTPase"/>
</dbReference>
<dbReference type="NCBIfam" id="TIGR04406">
    <property type="entry name" value="LPS_export_lptB"/>
    <property type="match status" value="1"/>
</dbReference>
<dbReference type="NCBIfam" id="NF008144">
    <property type="entry name" value="PRK10895.1"/>
    <property type="match status" value="1"/>
</dbReference>
<dbReference type="PANTHER" id="PTHR45772">
    <property type="entry name" value="CONSERVED COMPONENT OF ABC TRANSPORTER FOR NATURAL AMINO ACIDS-RELATED"/>
    <property type="match status" value="1"/>
</dbReference>
<dbReference type="PANTHER" id="PTHR45772:SF10">
    <property type="entry name" value="LIPOPOLYSACCHARIDE EXPORT SYSTEM ATP-BINDING PROTEIN LPTB"/>
    <property type="match status" value="1"/>
</dbReference>
<dbReference type="Pfam" id="PF00005">
    <property type="entry name" value="ABC_tran"/>
    <property type="match status" value="1"/>
</dbReference>
<dbReference type="Pfam" id="PF12399">
    <property type="entry name" value="BCA_ABC_TP_C"/>
    <property type="match status" value="1"/>
</dbReference>
<dbReference type="SMART" id="SM00382">
    <property type="entry name" value="AAA"/>
    <property type="match status" value="1"/>
</dbReference>
<dbReference type="SUPFAM" id="SSF52540">
    <property type="entry name" value="P-loop containing nucleoside triphosphate hydrolases"/>
    <property type="match status" value="1"/>
</dbReference>
<dbReference type="PROSITE" id="PS00211">
    <property type="entry name" value="ABC_TRANSPORTER_1"/>
    <property type="match status" value="1"/>
</dbReference>
<dbReference type="PROSITE" id="PS50893">
    <property type="entry name" value="ABC_TRANSPORTER_2"/>
    <property type="match status" value="1"/>
</dbReference>
<protein>
    <recommendedName>
        <fullName>Lipopolysaccharide export system ATP-binding protein LptB</fullName>
        <ecNumber>7.5.2.-</ecNumber>
    </recommendedName>
</protein>
<gene>
    <name type="primary">lptB</name>
    <name type="ordered locus">Z4564</name>
    <name type="ordered locus">ECs4080</name>
</gene>
<name>LPTB_ECO57</name>
<accession>P0A9V3</accession>
<accession>P31220</accession>
<organism>
    <name type="scientific">Escherichia coli O157:H7</name>
    <dbReference type="NCBI Taxonomy" id="83334"/>
    <lineage>
        <taxon>Bacteria</taxon>
        <taxon>Pseudomonadati</taxon>
        <taxon>Pseudomonadota</taxon>
        <taxon>Gammaproteobacteria</taxon>
        <taxon>Enterobacterales</taxon>
        <taxon>Enterobacteriaceae</taxon>
        <taxon>Escherichia</taxon>
    </lineage>
</organism>
<evidence type="ECO:0000250" key="1"/>
<evidence type="ECO:0000255" key="2">
    <source>
        <dbReference type="PROSITE-ProRule" id="PRU00434"/>
    </source>
</evidence>
<evidence type="ECO:0000305" key="3"/>
<keyword id="KW-0067">ATP-binding</keyword>
<keyword id="KW-0997">Cell inner membrane</keyword>
<keyword id="KW-1003">Cell membrane</keyword>
<keyword id="KW-0963">Cytoplasm</keyword>
<keyword id="KW-0472">Membrane</keyword>
<keyword id="KW-0547">Nucleotide-binding</keyword>
<keyword id="KW-1185">Reference proteome</keyword>
<keyword id="KW-1278">Translocase</keyword>
<keyword id="KW-0813">Transport</keyword>